<name>HIS3_METM5</name>
<protein>
    <recommendedName>
        <fullName evidence="1">Phosphoribosyl-AMP cyclohydrolase</fullName>
        <shortName evidence="1">PRA-CH</shortName>
        <ecNumber evidence="1">3.5.4.19</ecNumber>
    </recommendedName>
</protein>
<organism>
    <name type="scientific">Methanococcus maripaludis (strain C5 / ATCC BAA-1333)</name>
    <dbReference type="NCBI Taxonomy" id="402880"/>
    <lineage>
        <taxon>Archaea</taxon>
        <taxon>Methanobacteriati</taxon>
        <taxon>Methanobacteriota</taxon>
        <taxon>Methanomada group</taxon>
        <taxon>Methanococci</taxon>
        <taxon>Methanococcales</taxon>
        <taxon>Methanococcaceae</taxon>
        <taxon>Methanococcus</taxon>
    </lineage>
</organism>
<evidence type="ECO:0000255" key="1">
    <source>
        <dbReference type="HAMAP-Rule" id="MF_01021"/>
    </source>
</evidence>
<keyword id="KW-0028">Amino-acid biosynthesis</keyword>
<keyword id="KW-0963">Cytoplasm</keyword>
<keyword id="KW-0368">Histidine biosynthesis</keyword>
<keyword id="KW-0378">Hydrolase</keyword>
<keyword id="KW-0460">Magnesium</keyword>
<keyword id="KW-0479">Metal-binding</keyword>
<keyword id="KW-0862">Zinc</keyword>
<gene>
    <name evidence="1" type="primary">hisI</name>
    <name type="ordered locus">MmarC5_1393</name>
</gene>
<sequence>MDLDIKEIVKNMDLKFRNIEGKKLLLAISTDKSGKVLMTAFMSEESLEKSIETGFMHYYSTSRDKLWRKGEESGNVQKIINVFRDCDGDALLFTVEQTGWACHEGYMSCFHNKIDLSTGKSTVVGNKLD</sequence>
<comment type="function">
    <text evidence="1">Catalyzes the hydrolysis of the adenine ring of phosphoribosyl-AMP.</text>
</comment>
<comment type="catalytic activity">
    <reaction evidence="1">
        <text>1-(5-phospho-beta-D-ribosyl)-5'-AMP + H2O = 1-(5-phospho-beta-D-ribosyl)-5-[(5-phospho-beta-D-ribosylamino)methylideneamino]imidazole-4-carboxamide</text>
        <dbReference type="Rhea" id="RHEA:20049"/>
        <dbReference type="ChEBI" id="CHEBI:15377"/>
        <dbReference type="ChEBI" id="CHEBI:58435"/>
        <dbReference type="ChEBI" id="CHEBI:59457"/>
        <dbReference type="EC" id="3.5.4.19"/>
    </reaction>
</comment>
<comment type="cofactor">
    <cofactor evidence="1">
        <name>Mg(2+)</name>
        <dbReference type="ChEBI" id="CHEBI:18420"/>
    </cofactor>
    <text evidence="1">Binds 1 Mg(2+) ion per subunit.</text>
</comment>
<comment type="cofactor">
    <cofactor evidence="1">
        <name>Zn(2+)</name>
        <dbReference type="ChEBI" id="CHEBI:29105"/>
    </cofactor>
    <text evidence="1">Binds 1 zinc ion per subunit.</text>
</comment>
<comment type="pathway">
    <text evidence="1">Amino-acid biosynthesis; L-histidine biosynthesis; L-histidine from 5-phospho-alpha-D-ribose 1-diphosphate: step 3/9.</text>
</comment>
<comment type="subunit">
    <text evidence="1">Homodimer.</text>
</comment>
<comment type="subcellular location">
    <subcellularLocation>
        <location evidence="1">Cytoplasm</location>
    </subcellularLocation>
</comment>
<comment type="similarity">
    <text evidence="1">Belongs to the PRA-CH family.</text>
</comment>
<accession>A4FZQ7</accession>
<proteinExistence type="inferred from homology"/>
<dbReference type="EC" id="3.5.4.19" evidence="1"/>
<dbReference type="EMBL" id="CP000609">
    <property type="protein sequence ID" value="ABO35691.1"/>
    <property type="molecule type" value="Genomic_DNA"/>
</dbReference>
<dbReference type="RefSeq" id="WP_011869142.1">
    <property type="nucleotide sequence ID" value="NC_009135.1"/>
</dbReference>
<dbReference type="SMR" id="A4FZQ7"/>
<dbReference type="STRING" id="402880.MmarC5_1393"/>
<dbReference type="GeneID" id="4928008"/>
<dbReference type="KEGG" id="mmq:MmarC5_1393"/>
<dbReference type="eggNOG" id="arCOG02676">
    <property type="taxonomic scope" value="Archaea"/>
</dbReference>
<dbReference type="HOGENOM" id="CLU_048577_5_3_2"/>
<dbReference type="OrthoDB" id="5853at2157"/>
<dbReference type="UniPathway" id="UPA00031">
    <property type="reaction ID" value="UER00008"/>
</dbReference>
<dbReference type="Proteomes" id="UP000000253">
    <property type="component" value="Chromosome"/>
</dbReference>
<dbReference type="GO" id="GO:0005737">
    <property type="term" value="C:cytoplasm"/>
    <property type="evidence" value="ECO:0007669"/>
    <property type="project" value="UniProtKB-SubCell"/>
</dbReference>
<dbReference type="GO" id="GO:0000287">
    <property type="term" value="F:magnesium ion binding"/>
    <property type="evidence" value="ECO:0007669"/>
    <property type="project" value="UniProtKB-UniRule"/>
</dbReference>
<dbReference type="GO" id="GO:0004635">
    <property type="term" value="F:phosphoribosyl-AMP cyclohydrolase activity"/>
    <property type="evidence" value="ECO:0007669"/>
    <property type="project" value="UniProtKB-UniRule"/>
</dbReference>
<dbReference type="GO" id="GO:0008270">
    <property type="term" value="F:zinc ion binding"/>
    <property type="evidence" value="ECO:0007669"/>
    <property type="project" value="UniProtKB-UniRule"/>
</dbReference>
<dbReference type="GO" id="GO:0000105">
    <property type="term" value="P:L-histidine biosynthetic process"/>
    <property type="evidence" value="ECO:0007669"/>
    <property type="project" value="UniProtKB-UniRule"/>
</dbReference>
<dbReference type="FunFam" id="3.10.20.810:FF:000001">
    <property type="entry name" value="Histidine biosynthesis bifunctional protein HisIE"/>
    <property type="match status" value="1"/>
</dbReference>
<dbReference type="Gene3D" id="3.10.20.810">
    <property type="entry name" value="Phosphoribosyl-AMP cyclohydrolase"/>
    <property type="match status" value="1"/>
</dbReference>
<dbReference type="HAMAP" id="MF_01021">
    <property type="entry name" value="HisI"/>
    <property type="match status" value="1"/>
</dbReference>
<dbReference type="InterPro" id="IPR026660">
    <property type="entry name" value="PRA-CH"/>
</dbReference>
<dbReference type="InterPro" id="IPR002496">
    <property type="entry name" value="PRib_AMP_CycHydrolase_dom"/>
</dbReference>
<dbReference type="InterPro" id="IPR038019">
    <property type="entry name" value="PRib_AMP_CycHydrolase_sf"/>
</dbReference>
<dbReference type="NCBIfam" id="NF000768">
    <property type="entry name" value="PRK00051.1"/>
    <property type="match status" value="1"/>
</dbReference>
<dbReference type="PANTHER" id="PTHR42945">
    <property type="entry name" value="HISTIDINE BIOSYNTHESIS BIFUNCTIONAL PROTEIN"/>
    <property type="match status" value="1"/>
</dbReference>
<dbReference type="PANTHER" id="PTHR42945:SF1">
    <property type="entry name" value="HISTIDINE BIOSYNTHESIS BIFUNCTIONAL PROTEIN HIS7"/>
    <property type="match status" value="1"/>
</dbReference>
<dbReference type="Pfam" id="PF01502">
    <property type="entry name" value="PRA-CH"/>
    <property type="match status" value="1"/>
</dbReference>
<dbReference type="SUPFAM" id="SSF141734">
    <property type="entry name" value="HisI-like"/>
    <property type="match status" value="1"/>
</dbReference>
<reference key="1">
    <citation type="submission" date="2007-03" db="EMBL/GenBank/DDBJ databases">
        <title>Complete sequence of chromosome of Methanococcus maripaludis C5.</title>
        <authorList>
            <consortium name="US DOE Joint Genome Institute"/>
            <person name="Copeland A."/>
            <person name="Lucas S."/>
            <person name="Lapidus A."/>
            <person name="Barry K."/>
            <person name="Glavina del Rio T."/>
            <person name="Dalin E."/>
            <person name="Tice H."/>
            <person name="Pitluck S."/>
            <person name="Chertkov O."/>
            <person name="Brettin T."/>
            <person name="Bruce D."/>
            <person name="Han C."/>
            <person name="Detter J.C."/>
            <person name="Schmutz J."/>
            <person name="Larimer F."/>
            <person name="Land M."/>
            <person name="Hauser L."/>
            <person name="Kyrpides N."/>
            <person name="Mikhailova N."/>
            <person name="Sieprawska-Lupa M."/>
            <person name="Whitman W.B."/>
            <person name="Richardson P."/>
        </authorList>
    </citation>
    <scope>NUCLEOTIDE SEQUENCE [LARGE SCALE GENOMIC DNA]</scope>
    <source>
        <strain>C5 / ATCC BAA-1333</strain>
    </source>
</reference>
<feature type="chain" id="PRO_0000319728" description="Phosphoribosyl-AMP cyclohydrolase">
    <location>
        <begin position="1"/>
        <end position="129"/>
    </location>
</feature>
<feature type="binding site" evidence="1">
    <location>
        <position position="85"/>
    </location>
    <ligand>
        <name>Mg(2+)</name>
        <dbReference type="ChEBI" id="CHEBI:18420"/>
    </ligand>
</feature>
<feature type="binding site" evidence="1">
    <location>
        <position position="86"/>
    </location>
    <ligand>
        <name>Zn(2+)</name>
        <dbReference type="ChEBI" id="CHEBI:29105"/>
        <note>ligand shared between dimeric partners</note>
    </ligand>
</feature>
<feature type="binding site" evidence="1">
    <location>
        <position position="87"/>
    </location>
    <ligand>
        <name>Mg(2+)</name>
        <dbReference type="ChEBI" id="CHEBI:18420"/>
    </ligand>
</feature>
<feature type="binding site" evidence="1">
    <location>
        <position position="89"/>
    </location>
    <ligand>
        <name>Mg(2+)</name>
        <dbReference type="ChEBI" id="CHEBI:18420"/>
    </ligand>
</feature>
<feature type="binding site" evidence="1">
    <location>
        <position position="102"/>
    </location>
    <ligand>
        <name>Zn(2+)</name>
        <dbReference type="ChEBI" id="CHEBI:29105"/>
        <note>ligand shared between dimeric partners</note>
    </ligand>
</feature>
<feature type="binding site" evidence="1">
    <location>
        <position position="109"/>
    </location>
    <ligand>
        <name>Zn(2+)</name>
        <dbReference type="ChEBI" id="CHEBI:29105"/>
        <note>ligand shared between dimeric partners</note>
    </ligand>
</feature>